<reference key="1">
    <citation type="journal article" date="1998" name="Nature">
        <title>Deciphering the biology of Mycobacterium tuberculosis from the complete genome sequence.</title>
        <authorList>
            <person name="Cole S.T."/>
            <person name="Brosch R."/>
            <person name="Parkhill J."/>
            <person name="Garnier T."/>
            <person name="Churcher C.M."/>
            <person name="Harris D.E."/>
            <person name="Gordon S.V."/>
            <person name="Eiglmeier K."/>
            <person name="Gas S."/>
            <person name="Barry C.E. III"/>
            <person name="Tekaia F."/>
            <person name="Badcock K."/>
            <person name="Basham D."/>
            <person name="Brown D."/>
            <person name="Chillingworth T."/>
            <person name="Connor R."/>
            <person name="Davies R.M."/>
            <person name="Devlin K."/>
            <person name="Feltwell T."/>
            <person name="Gentles S."/>
            <person name="Hamlin N."/>
            <person name="Holroyd S."/>
            <person name="Hornsby T."/>
            <person name="Jagels K."/>
            <person name="Krogh A."/>
            <person name="McLean J."/>
            <person name="Moule S."/>
            <person name="Murphy L.D."/>
            <person name="Oliver S."/>
            <person name="Osborne J."/>
            <person name="Quail M.A."/>
            <person name="Rajandream M.A."/>
            <person name="Rogers J."/>
            <person name="Rutter S."/>
            <person name="Seeger K."/>
            <person name="Skelton S."/>
            <person name="Squares S."/>
            <person name="Squares R."/>
            <person name="Sulston J.E."/>
            <person name="Taylor K."/>
            <person name="Whitehead S."/>
            <person name="Barrell B.G."/>
        </authorList>
    </citation>
    <scope>NUCLEOTIDE SEQUENCE [LARGE SCALE GENOMIC DNA]</scope>
    <source>
        <strain>ATCC 25618 / H37Rv</strain>
    </source>
</reference>
<accession>P9WKM5</accession>
<accession>L0T816</accession>
<accession>P71546</accession>
<gene>
    <name type="ordered locus">Rv0964c</name>
    <name type="ORF">MTCY10D7.10</name>
</gene>
<protein>
    <recommendedName>
        <fullName>Uncharacterized protein Rv0964c</fullName>
    </recommendedName>
</protein>
<dbReference type="EMBL" id="AL123456">
    <property type="protein sequence ID" value="CCP43713.1"/>
    <property type="molecule type" value="Genomic_DNA"/>
</dbReference>
<dbReference type="PIR" id="B70718">
    <property type="entry name" value="B70718"/>
</dbReference>
<dbReference type="RefSeq" id="NP_215479.1">
    <property type="nucleotide sequence ID" value="NC_000962.3"/>
</dbReference>
<dbReference type="RefSeq" id="WP_003911344.1">
    <property type="nucleotide sequence ID" value="NC_000962.3"/>
</dbReference>
<dbReference type="SMR" id="P9WKM5"/>
<dbReference type="STRING" id="83332.Rv0964c"/>
<dbReference type="PaxDb" id="83332-Rv0964c"/>
<dbReference type="GeneID" id="885186"/>
<dbReference type="KEGG" id="mtu:Rv0964c"/>
<dbReference type="KEGG" id="mtv:RVBD_0964c"/>
<dbReference type="TubercuList" id="Rv0964c"/>
<dbReference type="InParanoid" id="P9WKM5"/>
<dbReference type="Proteomes" id="UP000001584">
    <property type="component" value="Chromosome"/>
</dbReference>
<name>Y964_MYCTU</name>
<sequence>MGLLGFGGAAAEAAQVATHHTTVLLDHHAGACEAVARAAEKAAEEVAAIKMRLQVIRDAAREHHLTIAYATGTALPPPDLSSYSPADQQAILNTAIRRASNVCWPTPRPPMRIWPRRFDAPPGPCRASRSMPNSAMRHPQCRRCRRRTATLRRSSGGGIR</sequence>
<keyword id="KW-1185">Reference proteome</keyword>
<organism>
    <name type="scientific">Mycobacterium tuberculosis (strain ATCC 25618 / H37Rv)</name>
    <dbReference type="NCBI Taxonomy" id="83332"/>
    <lineage>
        <taxon>Bacteria</taxon>
        <taxon>Bacillati</taxon>
        <taxon>Actinomycetota</taxon>
        <taxon>Actinomycetes</taxon>
        <taxon>Mycobacteriales</taxon>
        <taxon>Mycobacteriaceae</taxon>
        <taxon>Mycobacterium</taxon>
        <taxon>Mycobacterium tuberculosis complex</taxon>
    </lineage>
</organism>
<proteinExistence type="predicted"/>
<feature type="chain" id="PRO_0000103762" description="Uncharacterized protein Rv0964c">
    <location>
        <begin position="1"/>
        <end position="160"/>
    </location>
</feature>